<reference key="1">
    <citation type="journal article" date="2003" name="Mol. Microbiol.">
        <title>Genome-based analysis of virulence genes in a non-biofilm-forming Staphylococcus epidermidis strain (ATCC 12228).</title>
        <authorList>
            <person name="Zhang Y.-Q."/>
            <person name="Ren S.-X."/>
            <person name="Li H.-L."/>
            <person name="Wang Y.-X."/>
            <person name="Fu G."/>
            <person name="Yang J."/>
            <person name="Qin Z.-Q."/>
            <person name="Miao Y.-G."/>
            <person name="Wang W.-Y."/>
            <person name="Chen R.-S."/>
            <person name="Shen Y."/>
            <person name="Chen Z."/>
            <person name="Yuan Z.-H."/>
            <person name="Zhao G.-P."/>
            <person name="Qu D."/>
            <person name="Danchin A."/>
            <person name="Wen Y.-M."/>
        </authorList>
    </citation>
    <scope>NUCLEOTIDE SEQUENCE [LARGE SCALE GENOMIC DNA]</scope>
    <source>
        <strain>ATCC 12228 / FDA PCI 1200</strain>
    </source>
</reference>
<comment type="function">
    <text evidence="1">Acts on leucine, isoleucine and valine.</text>
</comment>
<comment type="catalytic activity">
    <reaction>
        <text>L-leucine + 2-oxoglutarate = 4-methyl-2-oxopentanoate + L-glutamate</text>
        <dbReference type="Rhea" id="RHEA:18321"/>
        <dbReference type="ChEBI" id="CHEBI:16810"/>
        <dbReference type="ChEBI" id="CHEBI:17865"/>
        <dbReference type="ChEBI" id="CHEBI:29985"/>
        <dbReference type="ChEBI" id="CHEBI:57427"/>
        <dbReference type="EC" id="2.6.1.42"/>
    </reaction>
</comment>
<comment type="catalytic activity">
    <reaction>
        <text>L-isoleucine + 2-oxoglutarate = (S)-3-methyl-2-oxopentanoate + L-glutamate</text>
        <dbReference type="Rhea" id="RHEA:24801"/>
        <dbReference type="ChEBI" id="CHEBI:16810"/>
        <dbReference type="ChEBI" id="CHEBI:29985"/>
        <dbReference type="ChEBI" id="CHEBI:35146"/>
        <dbReference type="ChEBI" id="CHEBI:58045"/>
        <dbReference type="EC" id="2.6.1.42"/>
    </reaction>
</comment>
<comment type="catalytic activity">
    <reaction>
        <text>L-valine + 2-oxoglutarate = 3-methyl-2-oxobutanoate + L-glutamate</text>
        <dbReference type="Rhea" id="RHEA:24813"/>
        <dbReference type="ChEBI" id="CHEBI:11851"/>
        <dbReference type="ChEBI" id="CHEBI:16810"/>
        <dbReference type="ChEBI" id="CHEBI:29985"/>
        <dbReference type="ChEBI" id="CHEBI:57762"/>
        <dbReference type="EC" id="2.6.1.42"/>
    </reaction>
</comment>
<comment type="cofactor">
    <cofactor evidence="1">
        <name>pyridoxal 5'-phosphate</name>
        <dbReference type="ChEBI" id="CHEBI:597326"/>
    </cofactor>
</comment>
<comment type="pathway">
    <text>Amino-acid biosynthesis; L-isoleucine biosynthesis; L-isoleucine from 2-oxobutanoate: step 4/4.</text>
</comment>
<comment type="pathway">
    <text>Amino-acid biosynthesis; L-leucine biosynthesis; L-leucine from 3-methyl-2-oxobutanoate: step 4/4.</text>
</comment>
<comment type="pathway">
    <text>Amino-acid biosynthesis; L-valine biosynthesis; L-valine from pyruvate: step 4/4.</text>
</comment>
<comment type="similarity">
    <text evidence="2">Belongs to the class-IV pyridoxal-phosphate-dependent aminotransferase family.</text>
</comment>
<accession>Q8CQ78</accession>
<dbReference type="EC" id="2.6.1.42"/>
<dbReference type="EMBL" id="AE015929">
    <property type="protein sequence ID" value="AAO03915.1"/>
    <property type="molecule type" value="Genomic_DNA"/>
</dbReference>
<dbReference type="RefSeq" id="NP_763873.1">
    <property type="nucleotide sequence ID" value="NC_004461.1"/>
</dbReference>
<dbReference type="RefSeq" id="WP_001832304.1">
    <property type="nucleotide sequence ID" value="NZ_WBME01000014.1"/>
</dbReference>
<dbReference type="SMR" id="Q8CQ78"/>
<dbReference type="KEGG" id="sep:SE_0318"/>
<dbReference type="PATRIC" id="fig|176280.10.peg.293"/>
<dbReference type="eggNOG" id="COG0115">
    <property type="taxonomic scope" value="Bacteria"/>
</dbReference>
<dbReference type="HOGENOM" id="CLU_031922_0_2_9"/>
<dbReference type="OrthoDB" id="9804984at2"/>
<dbReference type="UniPathway" id="UPA00047">
    <property type="reaction ID" value="UER00058"/>
</dbReference>
<dbReference type="UniPathway" id="UPA00048">
    <property type="reaction ID" value="UER00073"/>
</dbReference>
<dbReference type="UniPathway" id="UPA00049">
    <property type="reaction ID" value="UER00062"/>
</dbReference>
<dbReference type="Proteomes" id="UP000001411">
    <property type="component" value="Chromosome"/>
</dbReference>
<dbReference type="GO" id="GO:0052656">
    <property type="term" value="F:L-isoleucine-2-oxoglutarate transaminase activity"/>
    <property type="evidence" value="ECO:0007669"/>
    <property type="project" value="RHEA"/>
</dbReference>
<dbReference type="GO" id="GO:0052654">
    <property type="term" value="F:L-leucine-2-oxoglutarate transaminase activity"/>
    <property type="evidence" value="ECO:0007669"/>
    <property type="project" value="RHEA"/>
</dbReference>
<dbReference type="GO" id="GO:0052655">
    <property type="term" value="F:L-valine-2-oxoglutarate transaminase activity"/>
    <property type="evidence" value="ECO:0007669"/>
    <property type="project" value="RHEA"/>
</dbReference>
<dbReference type="GO" id="GO:0009097">
    <property type="term" value="P:isoleucine biosynthetic process"/>
    <property type="evidence" value="ECO:0007669"/>
    <property type="project" value="UniProtKB-UniPathway"/>
</dbReference>
<dbReference type="GO" id="GO:0009098">
    <property type="term" value="P:L-leucine biosynthetic process"/>
    <property type="evidence" value="ECO:0007669"/>
    <property type="project" value="UniProtKB-UniPathway"/>
</dbReference>
<dbReference type="GO" id="GO:0009099">
    <property type="term" value="P:L-valine biosynthetic process"/>
    <property type="evidence" value="ECO:0007669"/>
    <property type="project" value="UniProtKB-UniPathway"/>
</dbReference>
<dbReference type="CDD" id="cd01557">
    <property type="entry name" value="BCAT_beta_family"/>
    <property type="match status" value="1"/>
</dbReference>
<dbReference type="Gene3D" id="3.30.470.10">
    <property type="match status" value="1"/>
</dbReference>
<dbReference type="Gene3D" id="3.20.10.10">
    <property type="entry name" value="D-amino Acid Aminotransferase, subunit A, domain 2"/>
    <property type="match status" value="1"/>
</dbReference>
<dbReference type="InterPro" id="IPR001544">
    <property type="entry name" value="Aminotrans_IV"/>
</dbReference>
<dbReference type="InterPro" id="IPR018300">
    <property type="entry name" value="Aminotrans_IV_CS"/>
</dbReference>
<dbReference type="InterPro" id="IPR036038">
    <property type="entry name" value="Aminotransferase-like"/>
</dbReference>
<dbReference type="InterPro" id="IPR005786">
    <property type="entry name" value="B_amino_transII"/>
</dbReference>
<dbReference type="InterPro" id="IPR043132">
    <property type="entry name" value="BCAT-like_C"/>
</dbReference>
<dbReference type="InterPro" id="IPR043131">
    <property type="entry name" value="BCAT-like_N"/>
</dbReference>
<dbReference type="InterPro" id="IPR033939">
    <property type="entry name" value="BCAT_family"/>
</dbReference>
<dbReference type="NCBIfam" id="TIGR01123">
    <property type="entry name" value="ilvE_II"/>
    <property type="match status" value="1"/>
</dbReference>
<dbReference type="NCBIfam" id="NF009897">
    <property type="entry name" value="PRK13357.1"/>
    <property type="match status" value="1"/>
</dbReference>
<dbReference type="PANTHER" id="PTHR11825:SF44">
    <property type="entry name" value="BRANCHED-CHAIN-AMINO-ACID AMINOTRANSFERASE"/>
    <property type="match status" value="1"/>
</dbReference>
<dbReference type="PANTHER" id="PTHR11825">
    <property type="entry name" value="SUBGROUP IIII AMINOTRANSFERASE"/>
    <property type="match status" value="1"/>
</dbReference>
<dbReference type="Pfam" id="PF01063">
    <property type="entry name" value="Aminotran_4"/>
    <property type="match status" value="1"/>
</dbReference>
<dbReference type="PIRSF" id="PIRSF006468">
    <property type="entry name" value="BCAT1"/>
    <property type="match status" value="1"/>
</dbReference>
<dbReference type="SUPFAM" id="SSF56752">
    <property type="entry name" value="D-aminoacid aminotransferase-like PLP-dependent enzymes"/>
    <property type="match status" value="1"/>
</dbReference>
<dbReference type="PROSITE" id="PS00770">
    <property type="entry name" value="AA_TRANSFER_CLASS_4"/>
    <property type="match status" value="1"/>
</dbReference>
<organism>
    <name type="scientific">Staphylococcus epidermidis (strain ATCC 12228 / FDA PCI 1200)</name>
    <dbReference type="NCBI Taxonomy" id="176280"/>
    <lineage>
        <taxon>Bacteria</taxon>
        <taxon>Bacillati</taxon>
        <taxon>Bacillota</taxon>
        <taxon>Bacilli</taxon>
        <taxon>Bacillales</taxon>
        <taxon>Staphylococcaceae</taxon>
        <taxon>Staphylococcus</taxon>
    </lineage>
</organism>
<protein>
    <recommendedName>
        <fullName>Probable branched-chain-amino-acid aminotransferase</fullName>
        <shortName>BCAT</shortName>
        <ecNumber>2.6.1.42</ecNumber>
    </recommendedName>
</protein>
<proteinExistence type="inferred from homology"/>
<gene>
    <name type="primary">ilvE</name>
    <name type="ordered locus">SE_0318</name>
</gene>
<sequence length="358" mass="40195">MSEKVKFEKRESLKEKPDTANLGFGQYFTDYMLSVDYDADQGWHDMKIVPYAPFEISPAAQGLHYGQAVFEGLKAYKHNGEVVLFRPDQNFKRINNSLARLEMPEVDEEALLEGLKQLIDVERDWVPEGEGQSLYIRPFVFATEGVLGVRSSHQYKLLIILSPSGAYYGGDTLKSTKIYVEDEYVRAVRGGVGFAKVAGNYAASLLAQTNANKLGYDQVLWLDGVEQKYVEEVGSMNIFFVENGKVVTPALNGSILPGITRKSIIQLAEDLGYEVEERRVSIEELFNAYDKGELTEVFGSGTAAVISPVGTLRYEDREIVINNNEPGKITQKLYDTYTGIQSGKLEDKYGWRVEVPKY</sequence>
<keyword id="KW-0028">Amino-acid biosynthesis</keyword>
<keyword id="KW-0032">Aminotransferase</keyword>
<keyword id="KW-0100">Branched-chain amino acid biosynthesis</keyword>
<keyword id="KW-0663">Pyridoxal phosphate</keyword>
<keyword id="KW-0808">Transferase</keyword>
<feature type="chain" id="PRO_0000103283" description="Probable branched-chain-amino-acid aminotransferase">
    <location>
        <begin position="1"/>
        <end position="358"/>
    </location>
</feature>
<feature type="modified residue" description="N6-(pyridoxal phosphate)lysine" evidence="1">
    <location>
        <position position="196"/>
    </location>
</feature>
<evidence type="ECO:0000250" key="1"/>
<evidence type="ECO:0000305" key="2"/>
<name>ILVE_STAES</name>